<reference key="1">
    <citation type="journal article" date="2006" name="Proc. Natl. Acad. Sci. U.S.A.">
        <title>Comparative genomics of the lactic acid bacteria.</title>
        <authorList>
            <person name="Makarova K.S."/>
            <person name="Slesarev A."/>
            <person name="Wolf Y.I."/>
            <person name="Sorokin A."/>
            <person name="Mirkin B."/>
            <person name="Koonin E.V."/>
            <person name="Pavlov A."/>
            <person name="Pavlova N."/>
            <person name="Karamychev V."/>
            <person name="Polouchine N."/>
            <person name="Shakhova V."/>
            <person name="Grigoriev I."/>
            <person name="Lou Y."/>
            <person name="Rohksar D."/>
            <person name="Lucas S."/>
            <person name="Huang K."/>
            <person name="Goodstein D.M."/>
            <person name="Hawkins T."/>
            <person name="Plengvidhya V."/>
            <person name="Welker D."/>
            <person name="Hughes J."/>
            <person name="Goh Y."/>
            <person name="Benson A."/>
            <person name="Baldwin K."/>
            <person name="Lee J.-H."/>
            <person name="Diaz-Muniz I."/>
            <person name="Dosti B."/>
            <person name="Smeianov V."/>
            <person name="Wechter W."/>
            <person name="Barabote R."/>
            <person name="Lorca G."/>
            <person name="Altermann E."/>
            <person name="Barrangou R."/>
            <person name="Ganesan B."/>
            <person name="Xie Y."/>
            <person name="Rawsthorne H."/>
            <person name="Tamir D."/>
            <person name="Parker C."/>
            <person name="Breidt F."/>
            <person name="Broadbent J.R."/>
            <person name="Hutkins R."/>
            <person name="O'Sullivan D."/>
            <person name="Steele J."/>
            <person name="Unlu G."/>
            <person name="Saier M.H. Jr."/>
            <person name="Klaenhammer T."/>
            <person name="Richardson P."/>
            <person name="Kozyavkin S."/>
            <person name="Weimer B.C."/>
            <person name="Mills D.A."/>
        </authorList>
    </citation>
    <scope>NUCLEOTIDE SEQUENCE [LARGE SCALE GENOMIC DNA]</scope>
    <source>
        <strain>ATCC 8293 / DSM 20343 / BCRC 11652 / CCM 1803 / JCM 6124 / NCDO 523 / NBRC 100496 / NCIMB 8023 / NCTC 12954 / NRRL B-1118 / 37Y</strain>
    </source>
</reference>
<keyword id="KW-0066">ATP synthesis</keyword>
<keyword id="KW-1003">Cell membrane</keyword>
<keyword id="KW-0138">CF(0)</keyword>
<keyword id="KW-0375">Hydrogen ion transport</keyword>
<keyword id="KW-0406">Ion transport</keyword>
<keyword id="KW-0472">Membrane</keyword>
<keyword id="KW-1185">Reference proteome</keyword>
<keyword id="KW-0812">Transmembrane</keyword>
<keyword id="KW-1133">Transmembrane helix</keyword>
<keyword id="KW-0813">Transport</keyword>
<sequence length="167" mass="17868">MLGITTLAALPLGNMLFIIIAFLLLMLILKKVAYGPLTKVLDERADKISSDIDGAEVARQEAEKLASQRQAELAETRQNATKVVNDAKASAQKQSDLIVSAANDRAASVSQQAQTDAQKLKEDAISGAKNDVAALSVAIASKLMQKELSLNDQQALIDAYISDLETK</sequence>
<feature type="chain" id="PRO_0000368565" description="ATP synthase subunit b">
    <location>
        <begin position="1"/>
        <end position="167"/>
    </location>
</feature>
<feature type="transmembrane region" description="Helical" evidence="1">
    <location>
        <begin position="9"/>
        <end position="29"/>
    </location>
</feature>
<gene>
    <name evidence="1" type="primary">atpF</name>
    <name type="ordered locus">LEUM_1873</name>
</gene>
<name>ATPF_LEUMM</name>
<dbReference type="EMBL" id="CP000414">
    <property type="protein sequence ID" value="ABJ62947.1"/>
    <property type="molecule type" value="Genomic_DNA"/>
</dbReference>
<dbReference type="RefSeq" id="WP_011680436.1">
    <property type="nucleotide sequence ID" value="NC_008531.1"/>
</dbReference>
<dbReference type="SMR" id="Q03V25"/>
<dbReference type="EnsemblBacteria" id="ABJ62947">
    <property type="protein sequence ID" value="ABJ62947"/>
    <property type="gene ID" value="LEUM_1873"/>
</dbReference>
<dbReference type="GeneID" id="29577226"/>
<dbReference type="KEGG" id="lme:LEUM_1873"/>
<dbReference type="eggNOG" id="COG0711">
    <property type="taxonomic scope" value="Bacteria"/>
</dbReference>
<dbReference type="HOGENOM" id="CLU_079215_4_2_9"/>
<dbReference type="Proteomes" id="UP000000362">
    <property type="component" value="Chromosome"/>
</dbReference>
<dbReference type="GO" id="GO:0005886">
    <property type="term" value="C:plasma membrane"/>
    <property type="evidence" value="ECO:0007669"/>
    <property type="project" value="UniProtKB-SubCell"/>
</dbReference>
<dbReference type="GO" id="GO:0045259">
    <property type="term" value="C:proton-transporting ATP synthase complex"/>
    <property type="evidence" value="ECO:0007669"/>
    <property type="project" value="UniProtKB-KW"/>
</dbReference>
<dbReference type="GO" id="GO:0046933">
    <property type="term" value="F:proton-transporting ATP synthase activity, rotational mechanism"/>
    <property type="evidence" value="ECO:0007669"/>
    <property type="project" value="UniProtKB-UniRule"/>
</dbReference>
<dbReference type="GO" id="GO:0046961">
    <property type="term" value="F:proton-transporting ATPase activity, rotational mechanism"/>
    <property type="evidence" value="ECO:0007669"/>
    <property type="project" value="TreeGrafter"/>
</dbReference>
<dbReference type="CDD" id="cd06503">
    <property type="entry name" value="ATP-synt_Fo_b"/>
    <property type="match status" value="1"/>
</dbReference>
<dbReference type="HAMAP" id="MF_01398">
    <property type="entry name" value="ATP_synth_b_bprime"/>
    <property type="match status" value="1"/>
</dbReference>
<dbReference type="InterPro" id="IPR002146">
    <property type="entry name" value="ATP_synth_b/b'su_bac/chlpt"/>
</dbReference>
<dbReference type="InterPro" id="IPR005864">
    <property type="entry name" value="ATP_synth_F0_bsu_bac"/>
</dbReference>
<dbReference type="InterPro" id="IPR050059">
    <property type="entry name" value="ATP_synthase_B_chain"/>
</dbReference>
<dbReference type="NCBIfam" id="TIGR01144">
    <property type="entry name" value="ATP_synt_b"/>
    <property type="match status" value="1"/>
</dbReference>
<dbReference type="PANTHER" id="PTHR33445:SF1">
    <property type="entry name" value="ATP SYNTHASE SUBUNIT B"/>
    <property type="match status" value="1"/>
</dbReference>
<dbReference type="PANTHER" id="PTHR33445">
    <property type="entry name" value="ATP SYNTHASE SUBUNIT B', CHLOROPLASTIC"/>
    <property type="match status" value="1"/>
</dbReference>
<dbReference type="Pfam" id="PF00430">
    <property type="entry name" value="ATP-synt_B"/>
    <property type="match status" value="1"/>
</dbReference>
<proteinExistence type="inferred from homology"/>
<accession>Q03V25</accession>
<comment type="function">
    <text evidence="1">F(1)F(0) ATP synthase produces ATP from ADP in the presence of a proton or sodium gradient. F-type ATPases consist of two structural domains, F(1) containing the extramembraneous catalytic core and F(0) containing the membrane proton channel, linked together by a central stalk and a peripheral stalk. During catalysis, ATP synthesis in the catalytic domain of F(1) is coupled via a rotary mechanism of the central stalk subunits to proton translocation.</text>
</comment>
<comment type="function">
    <text evidence="1">Component of the F(0) channel, it forms part of the peripheral stalk, linking F(1) to F(0).</text>
</comment>
<comment type="subunit">
    <text evidence="1">F-type ATPases have 2 components, F(1) - the catalytic core - and F(0) - the membrane proton channel. F(1) has five subunits: alpha(3), beta(3), gamma(1), delta(1), epsilon(1). F(0) has three main subunits: a(1), b(2) and c(10-14). The alpha and beta chains form an alternating ring which encloses part of the gamma chain. F(1) is attached to F(0) by a central stalk formed by the gamma and epsilon chains, while a peripheral stalk is formed by the delta and b chains.</text>
</comment>
<comment type="subcellular location">
    <subcellularLocation>
        <location evidence="1">Cell membrane</location>
        <topology evidence="1">Single-pass membrane protein</topology>
    </subcellularLocation>
</comment>
<comment type="similarity">
    <text evidence="1">Belongs to the ATPase B chain family.</text>
</comment>
<evidence type="ECO:0000255" key="1">
    <source>
        <dbReference type="HAMAP-Rule" id="MF_01398"/>
    </source>
</evidence>
<organism>
    <name type="scientific">Leuconostoc mesenteroides subsp. mesenteroides (strain ATCC 8293 / DSM 20343 / BCRC 11652 / CCM 1803 / JCM 6124 / NCDO 523 / NBRC 100496 / NCIMB 8023 / NCTC 12954 / NRRL B-1118 / 37Y)</name>
    <dbReference type="NCBI Taxonomy" id="203120"/>
    <lineage>
        <taxon>Bacteria</taxon>
        <taxon>Bacillati</taxon>
        <taxon>Bacillota</taxon>
        <taxon>Bacilli</taxon>
        <taxon>Lactobacillales</taxon>
        <taxon>Lactobacillaceae</taxon>
        <taxon>Leuconostoc</taxon>
    </lineage>
</organism>
<protein>
    <recommendedName>
        <fullName evidence="1">ATP synthase subunit b</fullName>
    </recommendedName>
    <alternativeName>
        <fullName evidence="1">ATP synthase F(0) sector subunit b</fullName>
    </alternativeName>
    <alternativeName>
        <fullName evidence="1">ATPase subunit I</fullName>
    </alternativeName>
    <alternativeName>
        <fullName evidence="1">F-type ATPase subunit b</fullName>
        <shortName evidence="1">F-ATPase subunit b</shortName>
    </alternativeName>
</protein>